<feature type="chain" id="PRO_0000321933" description="Phospholipid phosphatase-related protein type 5">
    <location>
        <begin position="1"/>
        <end position="321"/>
    </location>
</feature>
<feature type="transmembrane region" description="Helical" evidence="3">
    <location>
        <begin position="10"/>
        <end position="30"/>
    </location>
</feature>
<feature type="transmembrane region" description="Helical" evidence="3">
    <location>
        <begin position="62"/>
        <end position="82"/>
    </location>
</feature>
<feature type="transmembrane region" description="Helical" evidence="3">
    <location>
        <begin position="122"/>
        <end position="142"/>
    </location>
</feature>
<feature type="transmembrane region" description="Helical" evidence="3">
    <location>
        <begin position="196"/>
        <end position="213"/>
    </location>
</feature>
<feature type="transmembrane region" description="Helical" evidence="3">
    <location>
        <begin position="225"/>
        <end position="245"/>
    </location>
</feature>
<feature type="transmembrane region" description="Helical" evidence="3">
    <location>
        <begin position="252"/>
        <end position="272"/>
    </location>
</feature>
<feature type="splice variant" id="VSP_031828" description="In isoform 2." evidence="5 6">
    <location>
        <begin position="307"/>
        <end position="311"/>
    </location>
</feature>
<reference key="1">
    <citation type="journal article" date="2005" name="Mol. Cell. Biochem.">
        <title>Cloning and characterization of a novel human phosphatidic acid phosphatase type 2, PAP2d, with two different transcripts PAP2d_v1 and PAP2d_v2.</title>
        <authorList>
            <person name="Sun L."/>
            <person name="Gu S."/>
            <person name="Sun Y."/>
            <person name="Zheng D."/>
            <person name="Wu Q."/>
            <person name="Li X."/>
            <person name="Dai J."/>
            <person name="Dai J."/>
            <person name="Ji C."/>
            <person name="Xie Y."/>
            <person name="Mao Y."/>
        </authorList>
    </citation>
    <scope>NUCLEOTIDE SEQUENCE [MRNA] (ISOFORMS 1 AND 2)</scope>
    <scope>TISSUE SPECIFICITY</scope>
    <source>
        <tissue>Fetal brain</tissue>
    </source>
</reference>
<reference key="2">
    <citation type="journal article" date="2010" name="Mol. Biol. Cell">
        <title>Plasticity-related gene 5 (PRG5) induces filopodia and neurite growth and impedes lysophosphatidic acid- and nogo-A-mediated axonal retraction.</title>
        <authorList>
            <person name="Broggini T."/>
            <person name="Nitsch R."/>
            <person name="Savaskan N.E."/>
        </authorList>
    </citation>
    <scope>NUCLEOTIDE SEQUENCE [MRNA] (ISOFORM 1)</scope>
</reference>
<reference key="3">
    <citation type="submission" date="2005-09" db="EMBL/GenBank/DDBJ databases">
        <authorList>
            <person name="Mural R.J."/>
            <person name="Istrail S."/>
            <person name="Sutton G.G."/>
            <person name="Florea L."/>
            <person name="Halpern A.L."/>
            <person name="Mobarry C.M."/>
            <person name="Lippert R."/>
            <person name="Walenz B."/>
            <person name="Shatkay H."/>
            <person name="Dew I."/>
            <person name="Miller J.R."/>
            <person name="Flanigan M.J."/>
            <person name="Edwards N.J."/>
            <person name="Bolanos R."/>
            <person name="Fasulo D."/>
            <person name="Halldorsson B.V."/>
            <person name="Hannenhalli S."/>
            <person name="Turner R."/>
            <person name="Yooseph S."/>
            <person name="Lu F."/>
            <person name="Nusskern D.R."/>
            <person name="Shue B.C."/>
            <person name="Zheng X.H."/>
            <person name="Zhong F."/>
            <person name="Delcher A.L."/>
            <person name="Huson D.H."/>
            <person name="Kravitz S.A."/>
            <person name="Mouchard L."/>
            <person name="Reinert K."/>
            <person name="Remington K.A."/>
            <person name="Clark A.G."/>
            <person name="Waterman M.S."/>
            <person name="Eichler E.E."/>
            <person name="Adams M.D."/>
            <person name="Hunkapiller M.W."/>
            <person name="Myers E.W."/>
            <person name="Venter J.C."/>
        </authorList>
    </citation>
    <scope>NUCLEOTIDE SEQUENCE [LARGE SCALE GENOMIC DNA]</scope>
</reference>
<reference key="4">
    <citation type="journal article" date="2006" name="Nature">
        <title>The DNA sequence and biological annotation of human chromosome 1.</title>
        <authorList>
            <person name="Gregory S.G."/>
            <person name="Barlow K.F."/>
            <person name="McLay K.E."/>
            <person name="Kaul R."/>
            <person name="Swarbreck D."/>
            <person name="Dunham A."/>
            <person name="Scott C.E."/>
            <person name="Howe K.L."/>
            <person name="Woodfine K."/>
            <person name="Spencer C.C.A."/>
            <person name="Jones M.C."/>
            <person name="Gillson C."/>
            <person name="Searle S."/>
            <person name="Zhou Y."/>
            <person name="Kokocinski F."/>
            <person name="McDonald L."/>
            <person name="Evans R."/>
            <person name="Phillips K."/>
            <person name="Atkinson A."/>
            <person name="Cooper R."/>
            <person name="Jones C."/>
            <person name="Hall R.E."/>
            <person name="Andrews T.D."/>
            <person name="Lloyd C."/>
            <person name="Ainscough R."/>
            <person name="Almeida J.P."/>
            <person name="Ambrose K.D."/>
            <person name="Anderson F."/>
            <person name="Andrew R.W."/>
            <person name="Ashwell R.I.S."/>
            <person name="Aubin K."/>
            <person name="Babbage A.K."/>
            <person name="Bagguley C.L."/>
            <person name="Bailey J."/>
            <person name="Beasley H."/>
            <person name="Bethel G."/>
            <person name="Bird C.P."/>
            <person name="Bray-Allen S."/>
            <person name="Brown J.Y."/>
            <person name="Brown A.J."/>
            <person name="Buckley D."/>
            <person name="Burton J."/>
            <person name="Bye J."/>
            <person name="Carder C."/>
            <person name="Chapman J.C."/>
            <person name="Clark S.Y."/>
            <person name="Clarke G."/>
            <person name="Clee C."/>
            <person name="Cobley V."/>
            <person name="Collier R.E."/>
            <person name="Corby N."/>
            <person name="Coville G.J."/>
            <person name="Davies J."/>
            <person name="Deadman R."/>
            <person name="Dunn M."/>
            <person name="Earthrowl M."/>
            <person name="Ellington A.G."/>
            <person name="Errington H."/>
            <person name="Frankish A."/>
            <person name="Frankland J."/>
            <person name="French L."/>
            <person name="Garner P."/>
            <person name="Garnett J."/>
            <person name="Gay L."/>
            <person name="Ghori M.R.J."/>
            <person name="Gibson R."/>
            <person name="Gilby L.M."/>
            <person name="Gillett W."/>
            <person name="Glithero R.J."/>
            <person name="Grafham D.V."/>
            <person name="Griffiths C."/>
            <person name="Griffiths-Jones S."/>
            <person name="Grocock R."/>
            <person name="Hammond S."/>
            <person name="Harrison E.S.I."/>
            <person name="Hart E."/>
            <person name="Haugen E."/>
            <person name="Heath P.D."/>
            <person name="Holmes S."/>
            <person name="Holt K."/>
            <person name="Howden P.J."/>
            <person name="Hunt A.R."/>
            <person name="Hunt S.E."/>
            <person name="Hunter G."/>
            <person name="Isherwood J."/>
            <person name="James R."/>
            <person name="Johnson C."/>
            <person name="Johnson D."/>
            <person name="Joy A."/>
            <person name="Kay M."/>
            <person name="Kershaw J.K."/>
            <person name="Kibukawa M."/>
            <person name="Kimberley A.M."/>
            <person name="King A."/>
            <person name="Knights A.J."/>
            <person name="Lad H."/>
            <person name="Laird G."/>
            <person name="Lawlor S."/>
            <person name="Leongamornlert D.A."/>
            <person name="Lloyd D.M."/>
            <person name="Loveland J."/>
            <person name="Lovell J."/>
            <person name="Lush M.J."/>
            <person name="Lyne R."/>
            <person name="Martin S."/>
            <person name="Mashreghi-Mohammadi M."/>
            <person name="Matthews L."/>
            <person name="Matthews N.S.W."/>
            <person name="McLaren S."/>
            <person name="Milne S."/>
            <person name="Mistry S."/>
            <person name="Moore M.J.F."/>
            <person name="Nickerson T."/>
            <person name="O'Dell C.N."/>
            <person name="Oliver K."/>
            <person name="Palmeiri A."/>
            <person name="Palmer S.A."/>
            <person name="Parker A."/>
            <person name="Patel D."/>
            <person name="Pearce A.V."/>
            <person name="Peck A.I."/>
            <person name="Pelan S."/>
            <person name="Phelps K."/>
            <person name="Phillimore B.J."/>
            <person name="Plumb R."/>
            <person name="Rajan J."/>
            <person name="Raymond C."/>
            <person name="Rouse G."/>
            <person name="Saenphimmachak C."/>
            <person name="Sehra H.K."/>
            <person name="Sheridan E."/>
            <person name="Shownkeen R."/>
            <person name="Sims S."/>
            <person name="Skuce C.D."/>
            <person name="Smith M."/>
            <person name="Steward C."/>
            <person name="Subramanian S."/>
            <person name="Sycamore N."/>
            <person name="Tracey A."/>
            <person name="Tromans A."/>
            <person name="Van Helmond Z."/>
            <person name="Wall M."/>
            <person name="Wallis J.M."/>
            <person name="White S."/>
            <person name="Whitehead S.L."/>
            <person name="Wilkinson J.E."/>
            <person name="Willey D.L."/>
            <person name="Williams H."/>
            <person name="Wilming L."/>
            <person name="Wray P.W."/>
            <person name="Wu Z."/>
            <person name="Coulson A."/>
            <person name="Vaudin M."/>
            <person name="Sulston J.E."/>
            <person name="Durbin R.M."/>
            <person name="Hubbard T."/>
            <person name="Wooster R."/>
            <person name="Dunham I."/>
            <person name="Carter N.P."/>
            <person name="McVean G."/>
            <person name="Ross M.T."/>
            <person name="Harrow J."/>
            <person name="Olson M.V."/>
            <person name="Beck S."/>
            <person name="Rogers J."/>
            <person name="Bentley D.R."/>
        </authorList>
    </citation>
    <scope>NUCLEOTIDE SEQUENCE [LARGE SCALE GENOMIC DNA]</scope>
</reference>
<reference key="5">
    <citation type="journal article" date="2004" name="Genome Res.">
        <title>The status, quality, and expansion of the NIH full-length cDNA project: the Mammalian Gene Collection (MGC).</title>
        <authorList>
            <consortium name="The MGC Project Team"/>
        </authorList>
    </citation>
    <scope>NUCLEOTIDE SEQUENCE [LARGE SCALE MRNA] (ISOFORMS 1 AND 2)</scope>
    <source>
        <tissue>Brain</tissue>
        <tissue>Testis</tissue>
    </source>
</reference>
<keyword id="KW-0025">Alternative splicing</keyword>
<keyword id="KW-1003">Cell membrane</keyword>
<keyword id="KW-0472">Membrane</keyword>
<keyword id="KW-1267">Proteomics identification</keyword>
<keyword id="KW-1185">Reference proteome</keyword>
<keyword id="KW-0812">Transmembrane</keyword>
<keyword id="KW-1133">Transmembrane helix</keyword>
<organism>
    <name type="scientific">Homo sapiens</name>
    <name type="common">Human</name>
    <dbReference type="NCBI Taxonomy" id="9606"/>
    <lineage>
        <taxon>Eukaryota</taxon>
        <taxon>Metazoa</taxon>
        <taxon>Chordata</taxon>
        <taxon>Craniata</taxon>
        <taxon>Vertebrata</taxon>
        <taxon>Euteleostomi</taxon>
        <taxon>Mammalia</taxon>
        <taxon>Eutheria</taxon>
        <taxon>Euarchontoglires</taxon>
        <taxon>Primates</taxon>
        <taxon>Haplorrhini</taxon>
        <taxon>Catarrhini</taxon>
        <taxon>Hominidae</taxon>
        <taxon>Homo</taxon>
    </lineage>
</organism>
<evidence type="ECO:0000250" key="1">
    <source>
        <dbReference type="UniProtKB" id="Q6WAY2"/>
    </source>
</evidence>
<evidence type="ECO:0000250" key="2">
    <source>
        <dbReference type="UniProtKB" id="Q8BJ52"/>
    </source>
</evidence>
<evidence type="ECO:0000255" key="3"/>
<evidence type="ECO:0000269" key="4">
    <source>
    </source>
</evidence>
<evidence type="ECO:0000303" key="5">
    <source>
    </source>
</evidence>
<evidence type="ECO:0000303" key="6">
    <source>
    </source>
</evidence>
<evidence type="ECO:0000303" key="7">
    <source>
    </source>
</evidence>
<evidence type="ECO:0000305" key="8"/>
<evidence type="ECO:0000305" key="9">
    <source>
    </source>
</evidence>
<evidence type="ECO:0000312" key="10">
    <source>
        <dbReference type="HGNC" id="HGNC:31703"/>
    </source>
</evidence>
<gene>
    <name evidence="10" type="primary">PLPPR5</name>
    <name evidence="10" type="synonym">LPPR5</name>
    <name evidence="6" type="synonym">PAP2D</name>
    <name evidence="7" type="synonym">PRG5</name>
</gene>
<dbReference type="EMBL" id="AY574039">
    <property type="protein sequence ID" value="AAS76645.1"/>
    <property type="molecule type" value="mRNA"/>
</dbReference>
<dbReference type="EMBL" id="AY634620">
    <property type="protein sequence ID" value="AAT64918.1"/>
    <property type="molecule type" value="mRNA"/>
</dbReference>
<dbReference type="EMBL" id="FJ472844">
    <property type="protein sequence ID" value="ACJ60628.1"/>
    <property type="molecule type" value="mRNA"/>
</dbReference>
<dbReference type="EMBL" id="AL445433">
    <property type="status" value="NOT_ANNOTATED_CDS"/>
    <property type="molecule type" value="Genomic_DNA"/>
</dbReference>
<dbReference type="EMBL" id="AL590110">
    <property type="status" value="NOT_ANNOTATED_CDS"/>
    <property type="molecule type" value="Genomic_DNA"/>
</dbReference>
<dbReference type="EMBL" id="AL161744">
    <property type="status" value="NOT_ANNOTATED_CDS"/>
    <property type="molecule type" value="Genomic_DNA"/>
</dbReference>
<dbReference type="EMBL" id="CH471097">
    <property type="protein sequence ID" value="EAW72994.1"/>
    <property type="molecule type" value="Genomic_DNA"/>
</dbReference>
<dbReference type="EMBL" id="BC040174">
    <property type="protein sequence ID" value="AAH40174.1"/>
    <property type="status" value="ALT_INIT"/>
    <property type="molecule type" value="mRNA"/>
</dbReference>
<dbReference type="EMBL" id="BC136350">
    <property type="protein sequence ID" value="AAI36351.1"/>
    <property type="molecule type" value="mRNA"/>
</dbReference>
<dbReference type="EMBL" id="BC144000">
    <property type="protein sequence ID" value="AAI44001.1"/>
    <property type="molecule type" value="mRNA"/>
</dbReference>
<dbReference type="CCDS" id="CCDS30778.1">
    <molecule id="Q32ZL2-1"/>
</dbReference>
<dbReference type="CCDS" id="CCDS30779.1">
    <molecule id="Q32ZL2-2"/>
</dbReference>
<dbReference type="RefSeq" id="NP_001010861.1">
    <molecule id="Q32ZL2-2"/>
    <property type="nucleotide sequence ID" value="NM_001010861.3"/>
</dbReference>
<dbReference type="RefSeq" id="NP_001032394.1">
    <molecule id="Q32ZL2-1"/>
    <property type="nucleotide sequence ID" value="NM_001037317.2"/>
</dbReference>
<dbReference type="FunCoup" id="Q32ZL2">
    <property type="interactions" value="469"/>
</dbReference>
<dbReference type="STRING" id="9606.ENSP00000263177"/>
<dbReference type="DEPOD" id="PLPPR5"/>
<dbReference type="iPTMnet" id="Q32ZL2"/>
<dbReference type="PhosphoSitePlus" id="Q32ZL2"/>
<dbReference type="BioMuta" id="PLPPR5"/>
<dbReference type="DMDM" id="172046620"/>
<dbReference type="PaxDb" id="9606-ENSP00000263177"/>
<dbReference type="PeptideAtlas" id="Q32ZL2"/>
<dbReference type="ProteomicsDB" id="61633">
    <molecule id="Q32ZL2-1"/>
</dbReference>
<dbReference type="ProteomicsDB" id="61634">
    <molecule id="Q32ZL2-2"/>
</dbReference>
<dbReference type="Antibodypedia" id="19967">
    <property type="antibodies" value="117 antibodies from 18 providers"/>
</dbReference>
<dbReference type="DNASU" id="163404"/>
<dbReference type="Ensembl" id="ENST00000263177.5">
    <molecule id="Q32ZL2-1"/>
    <property type="protein sequence ID" value="ENSP00000263177.4"/>
    <property type="gene ID" value="ENSG00000117598.14"/>
</dbReference>
<dbReference type="Ensembl" id="ENST00000370188.7">
    <molecule id="Q32ZL2-2"/>
    <property type="protein sequence ID" value="ENSP00000359207.3"/>
    <property type="gene ID" value="ENSG00000117598.14"/>
</dbReference>
<dbReference type="GeneID" id="163404"/>
<dbReference type="KEGG" id="hsa:163404"/>
<dbReference type="MANE-Select" id="ENST00000263177.5">
    <property type="protein sequence ID" value="ENSP00000263177.4"/>
    <property type="RefSeq nucleotide sequence ID" value="NM_001037317.2"/>
    <property type="RefSeq protein sequence ID" value="NP_001032394.1"/>
</dbReference>
<dbReference type="UCSC" id="uc001dsb.4">
    <molecule id="Q32ZL2-1"/>
    <property type="organism name" value="human"/>
</dbReference>
<dbReference type="AGR" id="HGNC:31703"/>
<dbReference type="CTD" id="163404"/>
<dbReference type="DisGeNET" id="163404"/>
<dbReference type="GeneCards" id="PLPPR5"/>
<dbReference type="HGNC" id="HGNC:31703">
    <property type="gene designation" value="PLPPR5"/>
</dbReference>
<dbReference type="HPA" id="ENSG00000117598">
    <property type="expression patterns" value="Tissue enhanced (brain, retina, testis)"/>
</dbReference>
<dbReference type="neXtProt" id="NX_Q32ZL2"/>
<dbReference type="OpenTargets" id="ENSG00000117598"/>
<dbReference type="VEuPathDB" id="HostDB:ENSG00000117598"/>
<dbReference type="eggNOG" id="KOG3030">
    <property type="taxonomic scope" value="Eukaryota"/>
</dbReference>
<dbReference type="GeneTree" id="ENSGT00940000158610"/>
<dbReference type="InParanoid" id="Q32ZL2"/>
<dbReference type="OMA" id="SLMCMAF"/>
<dbReference type="OrthoDB" id="10030083at2759"/>
<dbReference type="PAN-GO" id="Q32ZL2">
    <property type="GO annotations" value="6 GO annotations based on evolutionary models"/>
</dbReference>
<dbReference type="PhylomeDB" id="Q32ZL2"/>
<dbReference type="BRENDA" id="3.1.3.4">
    <property type="organism ID" value="2681"/>
</dbReference>
<dbReference type="PathwayCommons" id="Q32ZL2"/>
<dbReference type="Reactome" id="R-HSA-419408">
    <property type="pathway name" value="Lysosphingolipid and LPA receptors"/>
</dbReference>
<dbReference type="BioGRID-ORCS" id="163404">
    <property type="hits" value="11 hits in 1101 CRISPR screens"/>
</dbReference>
<dbReference type="ChiTaRS" id="PLPPR5">
    <property type="organism name" value="human"/>
</dbReference>
<dbReference type="GenomeRNAi" id="163404"/>
<dbReference type="Pharos" id="Q32ZL2">
    <property type="development level" value="Tbio"/>
</dbReference>
<dbReference type="PRO" id="PR:Q32ZL2"/>
<dbReference type="Proteomes" id="UP000005640">
    <property type="component" value="Chromosome 1"/>
</dbReference>
<dbReference type="RNAct" id="Q32ZL2">
    <property type="molecule type" value="protein"/>
</dbReference>
<dbReference type="Bgee" id="ENSG00000117598">
    <property type="expression patterns" value="Expressed in cortical plate and 80 other cell types or tissues"/>
</dbReference>
<dbReference type="ExpressionAtlas" id="Q32ZL2">
    <property type="expression patterns" value="baseline and differential"/>
</dbReference>
<dbReference type="GO" id="GO:0005886">
    <property type="term" value="C:plasma membrane"/>
    <property type="evidence" value="ECO:0000250"/>
    <property type="project" value="UniProtKB"/>
</dbReference>
<dbReference type="GO" id="GO:0008195">
    <property type="term" value="F:phosphatidate phosphatase activity"/>
    <property type="evidence" value="ECO:0000318"/>
    <property type="project" value="GO_Central"/>
</dbReference>
<dbReference type="GO" id="GO:0046839">
    <property type="term" value="P:phospholipid dephosphorylation"/>
    <property type="evidence" value="ECO:0000318"/>
    <property type="project" value="GO_Central"/>
</dbReference>
<dbReference type="GO" id="GO:0006644">
    <property type="term" value="P:phospholipid metabolic process"/>
    <property type="evidence" value="ECO:0000318"/>
    <property type="project" value="GO_Central"/>
</dbReference>
<dbReference type="GO" id="GO:0051491">
    <property type="term" value="P:positive regulation of filopodium assembly"/>
    <property type="evidence" value="ECO:0000250"/>
    <property type="project" value="UniProtKB"/>
</dbReference>
<dbReference type="GO" id="GO:0010976">
    <property type="term" value="P:positive regulation of neuron projection development"/>
    <property type="evidence" value="ECO:0000250"/>
    <property type="project" value="UniProtKB"/>
</dbReference>
<dbReference type="GO" id="GO:0007165">
    <property type="term" value="P:signal transduction"/>
    <property type="evidence" value="ECO:0000318"/>
    <property type="project" value="GO_Central"/>
</dbReference>
<dbReference type="CDD" id="cd03384">
    <property type="entry name" value="PAP2_wunen"/>
    <property type="match status" value="1"/>
</dbReference>
<dbReference type="FunFam" id="1.20.144.10:FF:000002">
    <property type="entry name" value="phospholipid phosphatase-related protein type 5"/>
    <property type="match status" value="1"/>
</dbReference>
<dbReference type="Gene3D" id="1.20.144.10">
    <property type="entry name" value="Phosphatidic acid phosphatase type 2/haloperoxidase"/>
    <property type="match status" value="1"/>
</dbReference>
<dbReference type="InterPro" id="IPR036938">
    <property type="entry name" value="P_Acid_Pase_2/haloperoxi_sf"/>
</dbReference>
<dbReference type="InterPro" id="IPR000326">
    <property type="entry name" value="P_Acid_Pase_2/haloperoxidase"/>
</dbReference>
<dbReference type="InterPro" id="IPR043216">
    <property type="entry name" value="PA_PP_rel"/>
</dbReference>
<dbReference type="PANTHER" id="PTHR10165">
    <property type="entry name" value="LIPID PHOSPHATE PHOSPHATASE"/>
    <property type="match status" value="1"/>
</dbReference>
<dbReference type="PANTHER" id="PTHR10165:SF17">
    <property type="entry name" value="PHOSPHOLIPID PHOSPHATASE-RELATED PROTEIN TYPE 5"/>
    <property type="match status" value="1"/>
</dbReference>
<dbReference type="Pfam" id="PF01569">
    <property type="entry name" value="PAP2"/>
    <property type="match status" value="1"/>
</dbReference>
<dbReference type="SMART" id="SM00014">
    <property type="entry name" value="acidPPc"/>
    <property type="match status" value="1"/>
</dbReference>
<dbReference type="SUPFAM" id="SSF48317">
    <property type="entry name" value="Acid phosphatase/Vanadium-dependent haloperoxidase"/>
    <property type="match status" value="1"/>
</dbReference>
<sequence length="321" mass="35427">MPLLPAALTSSMLYFQMVIMAGTVMLAYYFEYTDTFTVNVQGFFCHDSAYRKPYPGPEDSSAVPPVLLYSLAAGVPVLVIIVGETAVFCLQLATRDFENQEKTILTGDCCYINPLVRRTVRFLGIYTFGLFATDIFVNAGQVVTGNLAPHFLALCKPNYTALGCQQYTQFISGEEACTGNPDLIMRARKTFPSKEAALSVYAAMYLTMYITNTIKAKGTRLAKPVLCLGLMCLAFLTGLNRVAEYRNHWSDVIAGFLVGISIAVFLVVCVVNNFKGRQAENEHIHMDNLAQMPMISIPRVESPLEKVTSVQNHITAFAEVT</sequence>
<accession>Q32ZL2</accession>
<accession>A8MPX4</accession>
<accession>B7UCH3</accession>
<accession>Q32ZD0</accession>
<accession>Q3ZCU7</accession>
<name>PLPR5_HUMAN</name>
<comment type="function">
    <text evidence="2">Induces filopodia formation and promotes neurite growth in a CDC42-independent manner; impedes neurite growth inhibitory-mediated axonal retraction.</text>
</comment>
<comment type="subcellular location">
    <subcellularLocation>
        <location evidence="2">Cell membrane</location>
        <topology evidence="3">Multi-pass membrane protein</topology>
    </subcellularLocation>
</comment>
<comment type="alternative products">
    <event type="alternative splicing"/>
    <isoform>
        <id>Q32ZL2-1</id>
        <name>1</name>
        <name>PAP2d_v1</name>
        <sequence type="displayed"/>
    </isoform>
    <isoform>
        <id>Q32ZL2-2</id>
        <name>2</name>
        <name>PAP2d_v2</name>
        <sequence type="described" ref="VSP_031828"/>
    </isoform>
</comment>
<comment type="tissue specificity">
    <text evidence="4">Isoform 1 is expressed in brain, lung, kidney and colon. Isoform 2 is expressed in placenta, skeletal muscle and kidney.</text>
</comment>
<comment type="similarity">
    <text evidence="8">Belongs to the PA-phosphatase related phosphoesterase family.</text>
</comment>
<comment type="caution">
    <text evidence="1 8">Has most probably no lipid phosphatase activity (By similarity). Critical residues that support the reaction mechanism in active members of that protein family, including the residues of the active site acting respectively as proton donor and nucleophile, are not conserved.</text>
</comment>
<comment type="sequence caution" evidence="8">
    <conflict type="erroneous initiation">
        <sequence resource="EMBL-CDS" id="AAH40174"/>
    </conflict>
</comment>
<proteinExistence type="evidence at protein level"/>
<protein>
    <recommendedName>
        <fullName evidence="8">Phospholipid phosphatase-related protein type 5</fullName>
    </recommendedName>
    <alternativeName>
        <fullName evidence="8">Lipid phosphate phosphatase-related protein type 5</fullName>
    </alternativeName>
    <alternativeName>
        <fullName evidence="6">Phosphatidic acid phosphatase type 2d</fullName>
    </alternativeName>
    <alternativeName>
        <fullName evidence="9">Plasticity-related gene 5 protein</fullName>
        <shortName>PRG-5</shortName>
    </alternativeName>
</protein>